<sequence length="393" mass="42032">MNVSAESGAPRRAGQRHEVGLAQLPPAPPTTVAVIEGLATGTPRRVVNQSDAADRVAELFLDPGQRERIPRVYQKSRITTRRMAVDPLDAKFDVFRREPATIRDRMHLFYEHAVPLAVDVSKRALAGLPYRAAEIGLLVLATSTGFIAPGVDVAIVKELGLSPSISRVVVNFMGCAAAMNALGTATNYVRAHPAMKALVVCIELCSVNAVFADDINDVVIHSLFGDGCAALVIGASQVQEKLEPGKVVVRSSFSQLLDNTEDGIVLGVNHNGITCELSENLPGYIFSGVAPVVTEMLWDNGLQISDIDLWAIHPGGPKIIEQSVRSLGISAELAAQSWDVLARFGNMLSVSLIFVLETMVQQAESAKAISTGVAFAFGPGVTVEGMLFDIIRR</sequence>
<organism>
    <name type="scientific">Mycobacterium tuberculosis (strain CDC 1551 / Oshkosh)</name>
    <dbReference type="NCBI Taxonomy" id="83331"/>
    <lineage>
        <taxon>Bacteria</taxon>
        <taxon>Bacillati</taxon>
        <taxon>Actinomycetota</taxon>
        <taxon>Actinomycetes</taxon>
        <taxon>Mycobacteriales</taxon>
        <taxon>Mycobacteriaceae</taxon>
        <taxon>Mycobacterium</taxon>
        <taxon>Mycobacterium tuberculosis complex</taxon>
    </lineage>
</organism>
<accession>P9WPF0</accession>
<accession>L0T6G2</accession>
<accession>Q79FQ0</accession>
<accession>Q7D8I1</accession>
<reference key="1">
    <citation type="journal article" date="2002" name="J. Bacteriol.">
        <title>Whole-genome comparison of Mycobacterium tuberculosis clinical and laboratory strains.</title>
        <authorList>
            <person name="Fleischmann R.D."/>
            <person name="Alland D."/>
            <person name="Eisen J.A."/>
            <person name="Carpenter L."/>
            <person name="White O."/>
            <person name="Peterson J.D."/>
            <person name="DeBoy R.T."/>
            <person name="Dodson R.J."/>
            <person name="Gwinn M.L."/>
            <person name="Haft D.H."/>
            <person name="Hickey E.K."/>
            <person name="Kolonay J.F."/>
            <person name="Nelson W.C."/>
            <person name="Umayam L.A."/>
            <person name="Ermolaeva M.D."/>
            <person name="Salzberg S.L."/>
            <person name="Delcher A."/>
            <person name="Utterback T.R."/>
            <person name="Weidman J.F."/>
            <person name="Khouri H.M."/>
            <person name="Gill J."/>
            <person name="Mikula A."/>
            <person name="Bishai W."/>
            <person name="Jacobs W.R. Jr."/>
            <person name="Venter J.C."/>
            <person name="Fraser C.M."/>
        </authorList>
    </citation>
    <scope>NUCLEOTIDE SEQUENCE [LARGE SCALE GENOMIC DNA]</scope>
    <source>
        <strain>CDC 1551 / Oshkosh</strain>
    </source>
</reference>
<dbReference type="EC" id="2.3.1.-" evidence="1"/>
<dbReference type="EMBL" id="AE000516">
    <property type="protein sequence ID" value="AAK45681.1"/>
    <property type="molecule type" value="Genomic_DNA"/>
</dbReference>
<dbReference type="PIR" id="A70958">
    <property type="entry name" value="A70958"/>
</dbReference>
<dbReference type="RefSeq" id="WP_003407185.1">
    <property type="nucleotide sequence ID" value="NZ_KK341227.1"/>
</dbReference>
<dbReference type="SMR" id="P9WPF0"/>
<dbReference type="KEGG" id="mtc:MT1417"/>
<dbReference type="PATRIC" id="fig|83331.31.peg.1524"/>
<dbReference type="HOGENOM" id="CLU_034992_0_1_11"/>
<dbReference type="UniPathway" id="UPA00094"/>
<dbReference type="Proteomes" id="UP000001020">
    <property type="component" value="Chromosome"/>
</dbReference>
<dbReference type="GO" id="GO:0016747">
    <property type="term" value="F:acyltransferase activity, transferring groups other than amino-acyl groups"/>
    <property type="evidence" value="ECO:0007669"/>
    <property type="project" value="InterPro"/>
</dbReference>
<dbReference type="GO" id="GO:0006633">
    <property type="term" value="P:fatty acid biosynthetic process"/>
    <property type="evidence" value="ECO:0007669"/>
    <property type="project" value="UniProtKB-UniPathway"/>
</dbReference>
<dbReference type="GO" id="GO:0030639">
    <property type="term" value="P:polyketide biosynthetic process"/>
    <property type="evidence" value="ECO:0007669"/>
    <property type="project" value="TreeGrafter"/>
</dbReference>
<dbReference type="CDD" id="cd00831">
    <property type="entry name" value="CHS_like"/>
    <property type="match status" value="1"/>
</dbReference>
<dbReference type="FunFam" id="3.40.47.10:FF:000014">
    <property type="entry name" value="Chalcone synthase 1"/>
    <property type="match status" value="1"/>
</dbReference>
<dbReference type="Gene3D" id="3.40.47.10">
    <property type="match status" value="2"/>
</dbReference>
<dbReference type="InterPro" id="IPR012328">
    <property type="entry name" value="Chalcone/stilbene_synt_C"/>
</dbReference>
<dbReference type="InterPro" id="IPR001099">
    <property type="entry name" value="Chalcone/stilbene_synt_N"/>
</dbReference>
<dbReference type="InterPro" id="IPR011141">
    <property type="entry name" value="Polyketide_synthase_type-III"/>
</dbReference>
<dbReference type="InterPro" id="IPR016039">
    <property type="entry name" value="Thiolase-like"/>
</dbReference>
<dbReference type="PANTHER" id="PTHR11877">
    <property type="entry name" value="HYDROXYMETHYLGLUTARYL-COA SYNTHASE"/>
    <property type="match status" value="1"/>
</dbReference>
<dbReference type="PANTHER" id="PTHR11877:SF46">
    <property type="entry name" value="TYPE III POLYKETIDE SYNTHASE A"/>
    <property type="match status" value="1"/>
</dbReference>
<dbReference type="Pfam" id="PF02797">
    <property type="entry name" value="Chal_sti_synt_C"/>
    <property type="match status" value="1"/>
</dbReference>
<dbReference type="Pfam" id="PF00195">
    <property type="entry name" value="Chal_sti_synt_N"/>
    <property type="match status" value="1"/>
</dbReference>
<dbReference type="PIRSF" id="PIRSF000451">
    <property type="entry name" value="PKS_III"/>
    <property type="match status" value="1"/>
</dbReference>
<dbReference type="SUPFAM" id="SSF53901">
    <property type="entry name" value="Thiolase-like"/>
    <property type="match status" value="1"/>
</dbReference>
<evidence type="ECO:0000250" key="1">
    <source>
        <dbReference type="UniProtKB" id="P9WPF1"/>
    </source>
</evidence>
<evidence type="ECO:0000256" key="2">
    <source>
        <dbReference type="SAM" id="MobiDB-lite"/>
    </source>
</evidence>
<evidence type="ECO:0000305" key="3"/>
<name>PKS18_MYCTO</name>
<proteinExistence type="inferred from homology"/>
<feature type="chain" id="PRO_0000426963" description="Alpha-pyrone synthesis polyketide synthase-like Pks18">
    <location>
        <begin position="1"/>
        <end position="393"/>
    </location>
</feature>
<feature type="region of interest" description="Disordered" evidence="2">
    <location>
        <begin position="1"/>
        <end position="26"/>
    </location>
</feature>
<feature type="active site" description="Nucleophile" evidence="1">
    <location>
        <position position="175"/>
    </location>
</feature>
<feature type="binding site" evidence="1">
    <location>
        <position position="221"/>
    </location>
    <ligand>
        <name>substrate</name>
    </ligand>
</feature>
<keyword id="KW-0012">Acyltransferase</keyword>
<keyword id="KW-0276">Fatty acid metabolism</keyword>
<keyword id="KW-0443">Lipid metabolism</keyword>
<keyword id="KW-1185">Reference proteome</keyword>
<keyword id="KW-0808">Transferase</keyword>
<comment type="function">
    <text evidence="1">Involved in the biosynthesis of tri- and tetraketide alpha-pyrones. Pks18 catalyzes the extension of medium- and long-chain aliphatic acyl-CoA substrates by using malonyl-CoA as an extender molecule to synthesize polyketide products.</text>
</comment>
<comment type="pathway">
    <text evidence="1">Lipid metabolism; fatty acid biosynthesis.</text>
</comment>
<comment type="subunit">
    <text evidence="1">Homodimer.</text>
</comment>
<comment type="similarity">
    <text evidence="3">Belongs to the thiolase-like superfamily. Chalcone/stilbene synthases family.</text>
</comment>
<gene>
    <name type="primary">pks18</name>
    <name type="ordered locus">MT1417</name>
</gene>
<protein>
    <recommendedName>
        <fullName evidence="1">Alpha-pyrone synthesis polyketide synthase-like Pks18</fullName>
        <ecNumber evidence="1">2.3.1.-</ecNumber>
    </recommendedName>
    <alternativeName>
        <fullName evidence="1">Alpha-pyrone synthesis polyketide synthase type III Pks18</fullName>
    </alternativeName>
    <alternativeName>
        <fullName evidence="1">Chalcone synthase-like protein</fullName>
        <shortName evidence="1">CHS-like</shortName>
    </alternativeName>
</protein>